<protein>
    <recommendedName>
        <fullName evidence="1">Glycine dehydrogenase (decarboxylating)</fullName>
        <ecNumber evidence="1">1.4.4.2</ecNumber>
    </recommendedName>
    <alternativeName>
        <fullName evidence="1">Glycine cleavage system P-protein</fullName>
    </alternativeName>
    <alternativeName>
        <fullName evidence="1">Glycine decarboxylase</fullName>
    </alternativeName>
    <alternativeName>
        <fullName evidence="1">Glycine dehydrogenase (aminomethyl-transferring)</fullName>
    </alternativeName>
</protein>
<sequence>MKLEHPDRLMNRTPLSLAALETHDAFAERHIGPDAASQQAMLDTLGFATRAALIDAVIPASIRRAETLPLGPFAQPKSEAEALAALRALADKNQVFRSYIGQGYYNTHTPAVILRNVLENPAWYTAYTPYQPEISQGRLEALLNFQQMVADLTGLEISNASLLDEATAAAEAMTLLQRVGKPQSNVFYVADDVLPQTLEVIKTRAKPIGIEVKSGPAADAAAANAFGVLLQYPGANGDVRDYRALADAIHAAGGHVVVAADILALTVLMPPGEWGADVAVGNTQRFGVPMGFGGPHAAYMAVRDEFKRQMPGRLVGVTVDAQGKPALRLALQTREQHIRREKATSNVCTAQALLAIMASMYAVYHGPRGLKTIALRVNRIAALLAAGIRHLGYATVNDTFFDTLTIDTGARTAQLHAFAQAKRINLRRAGDTRVGVSVDETTTRADLADLLTIFAQAAGATAPDIDALDAGLLPAPALPPSLERTSAYLTHHVFNRHHSETEMLRYLRSLSDKDLALDRSMIPLGSCTMKLNATSEMLPVTWPEFGRIHPFAPAEQTVGYREMIDQLEQMLVAATGYAAVSLQPNAGSQGEYAGLLIIHAYHESRGESHRDVCLIPASAHGTNPASAHMAGMKVVVVACDAQGNVDIADLKAKADAHSHDLAAIMITYPSTHGVFEQNVREICEIVHAHGGQVYVDGANMNAMVGLTAPGQFGGDVSHLNLHKTFCIPHGGGGPGVGPVAVGPHLAKFLPNQRSTGYARGEDGIGAVSAAPYGSASILPISWMYIAMMGAKNLTAATETAILNANYIAKRLAPHYPVLYSGPGGLVAHECILDLRPIKDSSGITVDDVAKRLMDYGFHAPTMSFPVPGTLMVEPTESESQEELDRFIAAMIAIRDEIRAVEEGRADREDNPLRHAPHTAAVVTANEWPHAYSREQAAFPVASLVANKYWPPVGRADNAYGDRNLFCSCVPVSDYA</sequence>
<reference key="1">
    <citation type="journal article" date="2010" name="Genome Biol. Evol.">
        <title>Continuing evolution of Burkholderia mallei through genome reduction and large-scale rearrangements.</title>
        <authorList>
            <person name="Losada L."/>
            <person name="Ronning C.M."/>
            <person name="DeShazer D."/>
            <person name="Woods D."/>
            <person name="Fedorova N."/>
            <person name="Kim H.S."/>
            <person name="Shabalina S.A."/>
            <person name="Pearson T.R."/>
            <person name="Brinkac L."/>
            <person name="Tan P."/>
            <person name="Nandi T."/>
            <person name="Crabtree J."/>
            <person name="Badger J."/>
            <person name="Beckstrom-Sternberg S."/>
            <person name="Saqib M."/>
            <person name="Schutzer S.E."/>
            <person name="Keim P."/>
            <person name="Nierman W.C."/>
        </authorList>
    </citation>
    <scope>NUCLEOTIDE SEQUENCE [LARGE SCALE GENOMIC DNA]</scope>
    <source>
        <strain>668</strain>
    </source>
</reference>
<keyword id="KW-0560">Oxidoreductase</keyword>
<keyword id="KW-0663">Pyridoxal phosphate</keyword>
<feature type="chain" id="PRO_1000045575" description="Glycine dehydrogenase (decarboxylating)">
    <location>
        <begin position="1"/>
        <end position="975"/>
    </location>
</feature>
<feature type="modified residue" description="N6-(pyridoxal phosphate)lysine" evidence="1">
    <location>
        <position position="723"/>
    </location>
</feature>
<accession>A3NF00</accession>
<organism>
    <name type="scientific">Burkholderia pseudomallei (strain 668)</name>
    <dbReference type="NCBI Taxonomy" id="320373"/>
    <lineage>
        <taxon>Bacteria</taxon>
        <taxon>Pseudomonadati</taxon>
        <taxon>Pseudomonadota</taxon>
        <taxon>Betaproteobacteria</taxon>
        <taxon>Burkholderiales</taxon>
        <taxon>Burkholderiaceae</taxon>
        <taxon>Burkholderia</taxon>
        <taxon>pseudomallei group</taxon>
    </lineage>
</organism>
<proteinExistence type="inferred from homology"/>
<gene>
    <name evidence="1" type="primary">gcvP</name>
    <name type="ordered locus">BURPS668_3929</name>
</gene>
<comment type="function">
    <text evidence="1">The glycine cleavage system catalyzes the degradation of glycine. The P protein binds the alpha-amino group of glycine through its pyridoxal phosphate cofactor; CO(2) is released and the remaining methylamine moiety is then transferred to the lipoamide cofactor of the H protein.</text>
</comment>
<comment type="catalytic activity">
    <reaction evidence="1">
        <text>N(6)-[(R)-lipoyl]-L-lysyl-[glycine-cleavage complex H protein] + glycine + H(+) = N(6)-[(R)-S(8)-aminomethyldihydrolipoyl]-L-lysyl-[glycine-cleavage complex H protein] + CO2</text>
        <dbReference type="Rhea" id="RHEA:24304"/>
        <dbReference type="Rhea" id="RHEA-COMP:10494"/>
        <dbReference type="Rhea" id="RHEA-COMP:10495"/>
        <dbReference type="ChEBI" id="CHEBI:15378"/>
        <dbReference type="ChEBI" id="CHEBI:16526"/>
        <dbReference type="ChEBI" id="CHEBI:57305"/>
        <dbReference type="ChEBI" id="CHEBI:83099"/>
        <dbReference type="ChEBI" id="CHEBI:83143"/>
        <dbReference type="EC" id="1.4.4.2"/>
    </reaction>
</comment>
<comment type="cofactor">
    <cofactor evidence="1">
        <name>pyridoxal 5'-phosphate</name>
        <dbReference type="ChEBI" id="CHEBI:597326"/>
    </cofactor>
</comment>
<comment type="subunit">
    <text evidence="1">The glycine cleavage system is composed of four proteins: P, T, L and H.</text>
</comment>
<comment type="similarity">
    <text evidence="1">Belongs to the GcvP family.</text>
</comment>
<name>GCSP_BURP6</name>
<evidence type="ECO:0000255" key="1">
    <source>
        <dbReference type="HAMAP-Rule" id="MF_00711"/>
    </source>
</evidence>
<dbReference type="EC" id="1.4.4.2" evidence="1"/>
<dbReference type="EMBL" id="CP000570">
    <property type="protein sequence ID" value="ABN81991.1"/>
    <property type="molecule type" value="Genomic_DNA"/>
</dbReference>
<dbReference type="RefSeq" id="WP_011852356.1">
    <property type="nucleotide sequence ID" value="NC_009074.1"/>
</dbReference>
<dbReference type="SMR" id="A3NF00"/>
<dbReference type="KEGG" id="bpd:BURPS668_3929"/>
<dbReference type="HOGENOM" id="CLU_004620_2_1_4"/>
<dbReference type="GO" id="GO:0005829">
    <property type="term" value="C:cytosol"/>
    <property type="evidence" value="ECO:0007669"/>
    <property type="project" value="TreeGrafter"/>
</dbReference>
<dbReference type="GO" id="GO:0005960">
    <property type="term" value="C:glycine cleavage complex"/>
    <property type="evidence" value="ECO:0007669"/>
    <property type="project" value="TreeGrafter"/>
</dbReference>
<dbReference type="GO" id="GO:0016594">
    <property type="term" value="F:glycine binding"/>
    <property type="evidence" value="ECO:0007669"/>
    <property type="project" value="TreeGrafter"/>
</dbReference>
<dbReference type="GO" id="GO:0004375">
    <property type="term" value="F:glycine dehydrogenase (decarboxylating) activity"/>
    <property type="evidence" value="ECO:0007669"/>
    <property type="project" value="UniProtKB-EC"/>
</dbReference>
<dbReference type="GO" id="GO:0030170">
    <property type="term" value="F:pyridoxal phosphate binding"/>
    <property type="evidence" value="ECO:0007669"/>
    <property type="project" value="TreeGrafter"/>
</dbReference>
<dbReference type="GO" id="GO:0019464">
    <property type="term" value="P:glycine decarboxylation via glycine cleavage system"/>
    <property type="evidence" value="ECO:0007669"/>
    <property type="project" value="UniProtKB-UniRule"/>
</dbReference>
<dbReference type="CDD" id="cd00613">
    <property type="entry name" value="GDC-P"/>
    <property type="match status" value="2"/>
</dbReference>
<dbReference type="FunFam" id="3.40.640.10:FF:000005">
    <property type="entry name" value="Glycine dehydrogenase (decarboxylating), mitochondrial"/>
    <property type="match status" value="1"/>
</dbReference>
<dbReference type="FunFam" id="3.90.1150.10:FF:000007">
    <property type="entry name" value="Glycine dehydrogenase (decarboxylating), mitochondrial"/>
    <property type="match status" value="1"/>
</dbReference>
<dbReference type="FunFam" id="3.40.640.10:FF:000007">
    <property type="entry name" value="glycine dehydrogenase (Decarboxylating), mitochondrial"/>
    <property type="match status" value="1"/>
</dbReference>
<dbReference type="Gene3D" id="3.90.1150.10">
    <property type="entry name" value="Aspartate Aminotransferase, domain 1"/>
    <property type="match status" value="2"/>
</dbReference>
<dbReference type="Gene3D" id="3.40.640.10">
    <property type="entry name" value="Type I PLP-dependent aspartate aminotransferase-like (Major domain)"/>
    <property type="match status" value="2"/>
</dbReference>
<dbReference type="HAMAP" id="MF_00711">
    <property type="entry name" value="GcvP"/>
    <property type="match status" value="1"/>
</dbReference>
<dbReference type="InterPro" id="IPR003437">
    <property type="entry name" value="GcvP"/>
</dbReference>
<dbReference type="InterPro" id="IPR049316">
    <property type="entry name" value="GDC-P_C"/>
</dbReference>
<dbReference type="InterPro" id="IPR049315">
    <property type="entry name" value="GDC-P_N"/>
</dbReference>
<dbReference type="InterPro" id="IPR020581">
    <property type="entry name" value="GDC_P"/>
</dbReference>
<dbReference type="InterPro" id="IPR015424">
    <property type="entry name" value="PyrdxlP-dep_Trfase"/>
</dbReference>
<dbReference type="InterPro" id="IPR015421">
    <property type="entry name" value="PyrdxlP-dep_Trfase_major"/>
</dbReference>
<dbReference type="InterPro" id="IPR015422">
    <property type="entry name" value="PyrdxlP-dep_Trfase_small"/>
</dbReference>
<dbReference type="NCBIfam" id="TIGR00461">
    <property type="entry name" value="gcvP"/>
    <property type="match status" value="1"/>
</dbReference>
<dbReference type="NCBIfam" id="NF003346">
    <property type="entry name" value="PRK04366.1"/>
    <property type="match status" value="1"/>
</dbReference>
<dbReference type="PANTHER" id="PTHR11773:SF1">
    <property type="entry name" value="GLYCINE DEHYDROGENASE (DECARBOXYLATING), MITOCHONDRIAL"/>
    <property type="match status" value="1"/>
</dbReference>
<dbReference type="PANTHER" id="PTHR11773">
    <property type="entry name" value="GLYCINE DEHYDROGENASE, DECARBOXYLATING"/>
    <property type="match status" value="1"/>
</dbReference>
<dbReference type="Pfam" id="PF21478">
    <property type="entry name" value="GcvP2_C"/>
    <property type="match status" value="1"/>
</dbReference>
<dbReference type="Pfam" id="PF02347">
    <property type="entry name" value="GDC-P"/>
    <property type="match status" value="2"/>
</dbReference>
<dbReference type="SUPFAM" id="SSF53383">
    <property type="entry name" value="PLP-dependent transferases"/>
    <property type="match status" value="2"/>
</dbReference>